<sequence>MWALTVFVTILAAAIPITGVTGVCEDMAGNGRAPGEVWTEDSCTLYECGEDDSGELNTLFVAGCPLSLEIPKGCHYEPRSGNFPYCCPLLVCPDYVDKKNVRRRI</sequence>
<dbReference type="SMR" id="P0DQE0"/>
<dbReference type="GO" id="GO:0005576">
    <property type="term" value="C:extracellular region"/>
    <property type="evidence" value="ECO:0007669"/>
    <property type="project" value="UniProtKB-SubCell"/>
</dbReference>
<dbReference type="GO" id="GO:0090729">
    <property type="term" value="F:toxin activity"/>
    <property type="evidence" value="ECO:0007669"/>
    <property type="project" value="UniProtKB-KW"/>
</dbReference>
<dbReference type="InterPro" id="IPR029277">
    <property type="entry name" value="SVWC_dom"/>
</dbReference>
<dbReference type="Pfam" id="PF15430">
    <property type="entry name" value="SVWC"/>
    <property type="match status" value="1"/>
</dbReference>
<dbReference type="SMART" id="SM01318">
    <property type="entry name" value="SVWC"/>
    <property type="match status" value="1"/>
</dbReference>
<keyword id="KW-1015">Disulfide bond</keyword>
<keyword id="KW-0964">Secreted</keyword>
<keyword id="KW-0732">Signal</keyword>
<keyword id="KW-0800">Toxin</keyword>
<comment type="subcellular location">
    <subcellularLocation>
        <location evidence="4">Secreted</location>
    </subcellularLocation>
</comment>
<comment type="tissue specificity">
    <text evidence="4">Expressed by the venom gland.</text>
</comment>
<comment type="PTM">
    <text evidence="3">Contains 4 disulfide bonds.</text>
</comment>
<comment type="similarity">
    <text evidence="3">Belongs to the scoloptoxin-16 family.</text>
</comment>
<comment type="caution">
    <text evidence="4">All S.morsitans family members described in 'Undeheim et al., 2014' have not been imported into UniProtKB. Please, refer to this paper to access them.</text>
</comment>
<comment type="online information" name="National Center for Biotechnology Information (NCBI)">
    <link uri="https://www.ncbi.nlm.nih.gov/nuccore/GASH01000168"/>
</comment>
<protein>
    <recommendedName>
        <fullName evidence="2">U-scoloptoxin(16)-Sm4a</fullName>
        <shortName evidence="2">U-SLPTX(16)-Sm4a</shortName>
    </recommendedName>
</protein>
<feature type="signal peptide" evidence="1">
    <location>
        <begin position="1"/>
        <end position="22"/>
    </location>
</feature>
<feature type="chain" id="PRO_0000446811" description="U-scoloptoxin(16)-Sm4a" evidence="3">
    <location>
        <begin position="23"/>
        <end position="105"/>
    </location>
</feature>
<proteinExistence type="inferred from homology"/>
<organism>
    <name type="scientific">Scolopendra morsitans</name>
    <name type="common">Tanzanian blue ringleg centipede</name>
    <dbReference type="NCBI Taxonomy" id="943129"/>
    <lineage>
        <taxon>Eukaryota</taxon>
        <taxon>Metazoa</taxon>
        <taxon>Ecdysozoa</taxon>
        <taxon>Arthropoda</taxon>
        <taxon>Myriapoda</taxon>
        <taxon>Chilopoda</taxon>
        <taxon>Pleurostigmophora</taxon>
        <taxon>Scolopendromorpha</taxon>
        <taxon>Scolopendridae</taxon>
        <taxon>Scolopendra</taxon>
    </lineage>
</organism>
<name>TXG4A_SCOMO</name>
<accession>P0DQE0</accession>
<reference key="1">
    <citation type="journal article" date="2014" name="Mol. Biol. Evol.">
        <title>Clawing through evolution: toxin diversification and convergence in the ancient lineage Chilopoda (centipedes).</title>
        <authorList>
            <person name="Undheim E.A."/>
            <person name="Jones A."/>
            <person name="Clauser K.R."/>
            <person name="Holland J.W."/>
            <person name="Pineda S.S."/>
            <person name="King G.F."/>
            <person name="Fry B.G."/>
        </authorList>
    </citation>
    <scope>NUCLEOTIDE SEQUENCE [MRNA]</scope>
    <scope>NOMENCLATURE</scope>
    <source>
        <tissue>Venom gland</tissue>
    </source>
</reference>
<evidence type="ECO:0000255" key="1"/>
<evidence type="ECO:0000303" key="2">
    <source>
    </source>
</evidence>
<evidence type="ECO:0000305" key="3"/>
<evidence type="ECO:0000305" key="4">
    <source>
    </source>
</evidence>